<evidence type="ECO:0000255" key="1">
    <source>
        <dbReference type="HAMAP-Rule" id="MF_00086"/>
    </source>
</evidence>
<name>METK_YERPN</name>
<protein>
    <recommendedName>
        <fullName evidence="1">S-adenosylmethionine synthase</fullName>
        <shortName evidence="1">AdoMet synthase</shortName>
        <ecNumber evidence="1">2.5.1.6</ecNumber>
    </recommendedName>
    <alternativeName>
        <fullName evidence="1">MAT</fullName>
    </alternativeName>
    <alternativeName>
        <fullName evidence="1">Methionine adenosyltransferase</fullName>
    </alternativeName>
</protein>
<sequence length="384" mass="42020">MAKHLFTSESVSEGHPDKIADQISDAVLDAILEQDPKARVACETYVKTGMVLVGGEVTTNAWVDIEEITRRTIREIGYVHSDMGFDANSCAVLSAIGKQSPDINQGVDRENPLEQGAGDQGLMFGYATNETSVLMPAPITYAHRLVERQAEVRKNGALPWLRPDAKSQVTFQYDDGKIVGIDAVVLSTQHSEDINQKDLHEAVMEEIIKPVLPAEWITAHTKYFINPTGRFVIGGPMGDCGLTGRKIIVDTYGGMARHGGGAFSGKDPSKVDRSAAYAARYVAKNIVAAGLADRCEIQVSYAIGVAEPTSIMVEAFGTEKIPADQLTLLVREFFDLRPYGLIKMLDLLHPIYRETAAYGHFGREHFPWEKTDKAALLRDAAGLK</sequence>
<reference key="1">
    <citation type="journal article" date="2006" name="J. Bacteriol.">
        <title>Complete genome sequence of Yersinia pestis strains Antiqua and Nepal516: evidence of gene reduction in an emerging pathogen.</title>
        <authorList>
            <person name="Chain P.S.G."/>
            <person name="Hu P."/>
            <person name="Malfatti S.A."/>
            <person name="Radnedge L."/>
            <person name="Larimer F."/>
            <person name="Vergez L.M."/>
            <person name="Worsham P."/>
            <person name="Chu M.C."/>
            <person name="Andersen G.L."/>
        </authorList>
    </citation>
    <scope>NUCLEOTIDE SEQUENCE [LARGE SCALE GENOMIC DNA]</scope>
    <source>
        <strain>Nepal516</strain>
    </source>
</reference>
<reference key="2">
    <citation type="submission" date="2009-04" db="EMBL/GenBank/DDBJ databases">
        <title>Yersinia pestis Nepal516A whole genome shotgun sequencing project.</title>
        <authorList>
            <person name="Plunkett G. III"/>
            <person name="Anderson B.D."/>
            <person name="Baumler D.J."/>
            <person name="Burland V."/>
            <person name="Cabot E.L."/>
            <person name="Glasner J.D."/>
            <person name="Mau B."/>
            <person name="Neeno-Eckwall E."/>
            <person name="Perna N.T."/>
            <person name="Munk A.C."/>
            <person name="Tapia R."/>
            <person name="Green L.D."/>
            <person name="Rogers Y.C."/>
            <person name="Detter J.C."/>
            <person name="Bruce D.C."/>
            <person name="Brettin T.S."/>
        </authorList>
    </citation>
    <scope>NUCLEOTIDE SEQUENCE [LARGE SCALE GENOMIC DNA]</scope>
    <source>
        <strain>Nepal516</strain>
    </source>
</reference>
<comment type="function">
    <text evidence="1">Catalyzes the formation of S-adenosylmethionine (AdoMet) from methionine and ATP. The overall synthetic reaction is composed of two sequential steps, AdoMet formation and the subsequent tripolyphosphate hydrolysis which occurs prior to release of AdoMet from the enzyme.</text>
</comment>
<comment type="catalytic activity">
    <reaction evidence="1">
        <text>L-methionine + ATP + H2O = S-adenosyl-L-methionine + phosphate + diphosphate</text>
        <dbReference type="Rhea" id="RHEA:21080"/>
        <dbReference type="ChEBI" id="CHEBI:15377"/>
        <dbReference type="ChEBI" id="CHEBI:30616"/>
        <dbReference type="ChEBI" id="CHEBI:33019"/>
        <dbReference type="ChEBI" id="CHEBI:43474"/>
        <dbReference type="ChEBI" id="CHEBI:57844"/>
        <dbReference type="ChEBI" id="CHEBI:59789"/>
        <dbReference type="EC" id="2.5.1.6"/>
    </reaction>
</comment>
<comment type="cofactor">
    <cofactor evidence="1">
        <name>Mg(2+)</name>
        <dbReference type="ChEBI" id="CHEBI:18420"/>
    </cofactor>
    <text evidence="1">Binds 2 divalent ions per subunit.</text>
</comment>
<comment type="cofactor">
    <cofactor evidence="1">
        <name>K(+)</name>
        <dbReference type="ChEBI" id="CHEBI:29103"/>
    </cofactor>
    <text evidence="1">Binds 1 potassium ion per subunit.</text>
</comment>
<comment type="pathway">
    <text evidence="1">Amino-acid biosynthesis; S-adenosyl-L-methionine biosynthesis; S-adenosyl-L-methionine from L-methionine: step 1/1.</text>
</comment>
<comment type="subunit">
    <text evidence="1">Homotetramer; dimer of dimers.</text>
</comment>
<comment type="subcellular location">
    <subcellularLocation>
        <location evidence="1">Cytoplasm</location>
    </subcellularLocation>
</comment>
<comment type="similarity">
    <text evidence="1">Belongs to the AdoMet synthase family.</text>
</comment>
<dbReference type="EC" id="2.5.1.6" evidence="1"/>
<dbReference type="EMBL" id="CP000305">
    <property type="protein sequence ID" value="ABG19454.1"/>
    <property type="molecule type" value="Genomic_DNA"/>
</dbReference>
<dbReference type="EMBL" id="ACNQ01000017">
    <property type="protein sequence ID" value="EEO75621.1"/>
    <property type="molecule type" value="Genomic_DNA"/>
</dbReference>
<dbReference type="RefSeq" id="WP_002209971.1">
    <property type="nucleotide sequence ID" value="NZ_ACNQ01000017.1"/>
</dbReference>
<dbReference type="SMR" id="Q1CEX6"/>
<dbReference type="GeneID" id="57973710"/>
<dbReference type="KEGG" id="ypn:YPN_3127"/>
<dbReference type="HOGENOM" id="CLU_041802_1_1_6"/>
<dbReference type="UniPathway" id="UPA00315">
    <property type="reaction ID" value="UER00080"/>
</dbReference>
<dbReference type="Proteomes" id="UP000008936">
    <property type="component" value="Chromosome"/>
</dbReference>
<dbReference type="GO" id="GO:0005737">
    <property type="term" value="C:cytoplasm"/>
    <property type="evidence" value="ECO:0007669"/>
    <property type="project" value="UniProtKB-SubCell"/>
</dbReference>
<dbReference type="GO" id="GO:0005524">
    <property type="term" value="F:ATP binding"/>
    <property type="evidence" value="ECO:0007669"/>
    <property type="project" value="UniProtKB-UniRule"/>
</dbReference>
<dbReference type="GO" id="GO:0000287">
    <property type="term" value="F:magnesium ion binding"/>
    <property type="evidence" value="ECO:0007669"/>
    <property type="project" value="UniProtKB-UniRule"/>
</dbReference>
<dbReference type="GO" id="GO:0004478">
    <property type="term" value="F:methionine adenosyltransferase activity"/>
    <property type="evidence" value="ECO:0007669"/>
    <property type="project" value="UniProtKB-UniRule"/>
</dbReference>
<dbReference type="GO" id="GO:0006730">
    <property type="term" value="P:one-carbon metabolic process"/>
    <property type="evidence" value="ECO:0007669"/>
    <property type="project" value="UniProtKB-KW"/>
</dbReference>
<dbReference type="GO" id="GO:0006556">
    <property type="term" value="P:S-adenosylmethionine biosynthetic process"/>
    <property type="evidence" value="ECO:0007669"/>
    <property type="project" value="UniProtKB-UniRule"/>
</dbReference>
<dbReference type="CDD" id="cd18079">
    <property type="entry name" value="S-AdoMet_synt"/>
    <property type="match status" value="1"/>
</dbReference>
<dbReference type="FunFam" id="3.30.300.10:FF:000001">
    <property type="entry name" value="S-adenosylmethionine synthase"/>
    <property type="match status" value="1"/>
</dbReference>
<dbReference type="FunFam" id="3.30.300.10:FF:000003">
    <property type="entry name" value="S-adenosylmethionine synthase"/>
    <property type="match status" value="1"/>
</dbReference>
<dbReference type="Gene3D" id="3.30.300.10">
    <property type="match status" value="3"/>
</dbReference>
<dbReference type="HAMAP" id="MF_00086">
    <property type="entry name" value="S_AdoMet_synth1"/>
    <property type="match status" value="1"/>
</dbReference>
<dbReference type="InterPro" id="IPR022631">
    <property type="entry name" value="ADOMET_SYNTHASE_CS"/>
</dbReference>
<dbReference type="InterPro" id="IPR022630">
    <property type="entry name" value="S-AdoMet_synt_C"/>
</dbReference>
<dbReference type="InterPro" id="IPR022629">
    <property type="entry name" value="S-AdoMet_synt_central"/>
</dbReference>
<dbReference type="InterPro" id="IPR022628">
    <property type="entry name" value="S-AdoMet_synt_N"/>
</dbReference>
<dbReference type="InterPro" id="IPR002133">
    <property type="entry name" value="S-AdoMet_synthetase"/>
</dbReference>
<dbReference type="InterPro" id="IPR022636">
    <property type="entry name" value="S-AdoMet_synthetase_sfam"/>
</dbReference>
<dbReference type="NCBIfam" id="TIGR01034">
    <property type="entry name" value="metK"/>
    <property type="match status" value="1"/>
</dbReference>
<dbReference type="PANTHER" id="PTHR11964">
    <property type="entry name" value="S-ADENOSYLMETHIONINE SYNTHETASE"/>
    <property type="match status" value="1"/>
</dbReference>
<dbReference type="Pfam" id="PF02773">
    <property type="entry name" value="S-AdoMet_synt_C"/>
    <property type="match status" value="1"/>
</dbReference>
<dbReference type="Pfam" id="PF02772">
    <property type="entry name" value="S-AdoMet_synt_M"/>
    <property type="match status" value="1"/>
</dbReference>
<dbReference type="Pfam" id="PF00438">
    <property type="entry name" value="S-AdoMet_synt_N"/>
    <property type="match status" value="1"/>
</dbReference>
<dbReference type="PIRSF" id="PIRSF000497">
    <property type="entry name" value="MAT"/>
    <property type="match status" value="1"/>
</dbReference>
<dbReference type="SUPFAM" id="SSF55973">
    <property type="entry name" value="S-adenosylmethionine synthetase"/>
    <property type="match status" value="3"/>
</dbReference>
<dbReference type="PROSITE" id="PS00376">
    <property type="entry name" value="ADOMET_SYNTHASE_1"/>
    <property type="match status" value="1"/>
</dbReference>
<dbReference type="PROSITE" id="PS00377">
    <property type="entry name" value="ADOMET_SYNTHASE_2"/>
    <property type="match status" value="1"/>
</dbReference>
<proteinExistence type="inferred from homology"/>
<keyword id="KW-0067">ATP-binding</keyword>
<keyword id="KW-0963">Cytoplasm</keyword>
<keyword id="KW-0460">Magnesium</keyword>
<keyword id="KW-0479">Metal-binding</keyword>
<keyword id="KW-0547">Nucleotide-binding</keyword>
<keyword id="KW-0554">One-carbon metabolism</keyword>
<keyword id="KW-0630">Potassium</keyword>
<keyword id="KW-0808">Transferase</keyword>
<organism>
    <name type="scientific">Yersinia pestis bv. Antiqua (strain Nepal516)</name>
    <dbReference type="NCBI Taxonomy" id="377628"/>
    <lineage>
        <taxon>Bacteria</taxon>
        <taxon>Pseudomonadati</taxon>
        <taxon>Pseudomonadota</taxon>
        <taxon>Gammaproteobacteria</taxon>
        <taxon>Enterobacterales</taxon>
        <taxon>Yersiniaceae</taxon>
        <taxon>Yersinia</taxon>
    </lineage>
</organism>
<accession>Q1CEX6</accession>
<accession>C4GXH1</accession>
<gene>
    <name evidence="1" type="primary">metK</name>
    <name type="ordered locus">YPN_3127</name>
    <name type="ORF">YP516_3552</name>
</gene>
<feature type="chain" id="PRO_0000303003" description="S-adenosylmethionine synthase">
    <location>
        <begin position="1"/>
        <end position="384"/>
    </location>
</feature>
<feature type="region of interest" description="Flexible loop" evidence="1">
    <location>
        <begin position="99"/>
        <end position="109"/>
    </location>
</feature>
<feature type="binding site" description="in other chain" evidence="1">
    <location>
        <position position="15"/>
    </location>
    <ligand>
        <name>ATP</name>
        <dbReference type="ChEBI" id="CHEBI:30616"/>
        <note>ligand shared between two neighboring subunits</note>
    </ligand>
</feature>
<feature type="binding site" evidence="1">
    <location>
        <position position="17"/>
    </location>
    <ligand>
        <name>Mg(2+)</name>
        <dbReference type="ChEBI" id="CHEBI:18420"/>
    </ligand>
</feature>
<feature type="binding site" evidence="1">
    <location>
        <position position="43"/>
    </location>
    <ligand>
        <name>K(+)</name>
        <dbReference type="ChEBI" id="CHEBI:29103"/>
    </ligand>
</feature>
<feature type="binding site" description="in other chain" evidence="1">
    <location>
        <position position="56"/>
    </location>
    <ligand>
        <name>L-methionine</name>
        <dbReference type="ChEBI" id="CHEBI:57844"/>
        <note>ligand shared between two neighboring subunits</note>
    </ligand>
</feature>
<feature type="binding site" description="in other chain" evidence="1">
    <location>
        <position position="99"/>
    </location>
    <ligand>
        <name>L-methionine</name>
        <dbReference type="ChEBI" id="CHEBI:57844"/>
        <note>ligand shared between two neighboring subunits</note>
    </ligand>
</feature>
<feature type="binding site" description="in other chain" evidence="1">
    <location>
        <begin position="164"/>
        <end position="166"/>
    </location>
    <ligand>
        <name>ATP</name>
        <dbReference type="ChEBI" id="CHEBI:30616"/>
        <note>ligand shared between two neighboring subunits</note>
    </ligand>
</feature>
<feature type="binding site" description="in other chain" evidence="1">
    <location>
        <begin position="230"/>
        <end position="231"/>
    </location>
    <ligand>
        <name>ATP</name>
        <dbReference type="ChEBI" id="CHEBI:30616"/>
        <note>ligand shared between two neighboring subunits</note>
    </ligand>
</feature>
<feature type="binding site" evidence="1">
    <location>
        <position position="239"/>
    </location>
    <ligand>
        <name>ATP</name>
        <dbReference type="ChEBI" id="CHEBI:30616"/>
        <note>ligand shared between two neighboring subunits</note>
    </ligand>
</feature>
<feature type="binding site" evidence="1">
    <location>
        <position position="239"/>
    </location>
    <ligand>
        <name>L-methionine</name>
        <dbReference type="ChEBI" id="CHEBI:57844"/>
        <note>ligand shared between two neighboring subunits</note>
    </ligand>
</feature>
<feature type="binding site" description="in other chain" evidence="1">
    <location>
        <begin position="245"/>
        <end position="246"/>
    </location>
    <ligand>
        <name>ATP</name>
        <dbReference type="ChEBI" id="CHEBI:30616"/>
        <note>ligand shared between two neighboring subunits</note>
    </ligand>
</feature>
<feature type="binding site" evidence="1">
    <location>
        <position position="262"/>
    </location>
    <ligand>
        <name>ATP</name>
        <dbReference type="ChEBI" id="CHEBI:30616"/>
        <note>ligand shared between two neighboring subunits</note>
    </ligand>
</feature>
<feature type="binding site" evidence="1">
    <location>
        <position position="266"/>
    </location>
    <ligand>
        <name>ATP</name>
        <dbReference type="ChEBI" id="CHEBI:30616"/>
        <note>ligand shared between two neighboring subunits</note>
    </ligand>
</feature>
<feature type="binding site" description="in other chain" evidence="1">
    <location>
        <position position="270"/>
    </location>
    <ligand>
        <name>L-methionine</name>
        <dbReference type="ChEBI" id="CHEBI:57844"/>
        <note>ligand shared between two neighboring subunits</note>
    </ligand>
</feature>